<protein>
    <recommendedName>
        <fullName evidence="1">Adenylate kinase</fullName>
        <shortName evidence="1">AK</shortName>
        <ecNumber evidence="1">2.7.4.3</ecNumber>
    </recommendedName>
    <alternativeName>
        <fullName evidence="1">ATP-AMP transphosphorylase</fullName>
    </alternativeName>
    <alternativeName>
        <fullName evidence="1">ATP:AMP phosphotransferase</fullName>
    </alternativeName>
    <alternativeName>
        <fullName evidence="1">Adenylate monophosphate kinase</fullName>
    </alternativeName>
</protein>
<organism>
    <name type="scientific">Streptococcus pyogenes serotype M49 (strain NZ131)</name>
    <dbReference type="NCBI Taxonomy" id="471876"/>
    <lineage>
        <taxon>Bacteria</taxon>
        <taxon>Bacillati</taxon>
        <taxon>Bacillota</taxon>
        <taxon>Bacilli</taxon>
        <taxon>Lactobacillales</taxon>
        <taxon>Streptococcaceae</taxon>
        <taxon>Streptococcus</taxon>
    </lineage>
</organism>
<accession>B5XJ57</accession>
<dbReference type="EC" id="2.7.4.3" evidence="1"/>
<dbReference type="EMBL" id="CP000829">
    <property type="protein sequence ID" value="ACI60425.1"/>
    <property type="molecule type" value="Genomic_DNA"/>
</dbReference>
<dbReference type="SMR" id="B5XJ57"/>
<dbReference type="KEGG" id="soz:Spy49_0069"/>
<dbReference type="HOGENOM" id="CLU_032354_1_2_9"/>
<dbReference type="UniPathway" id="UPA00588">
    <property type="reaction ID" value="UER00649"/>
</dbReference>
<dbReference type="Proteomes" id="UP000001039">
    <property type="component" value="Chromosome"/>
</dbReference>
<dbReference type="GO" id="GO:0005737">
    <property type="term" value="C:cytoplasm"/>
    <property type="evidence" value="ECO:0007669"/>
    <property type="project" value="UniProtKB-SubCell"/>
</dbReference>
<dbReference type="GO" id="GO:0004017">
    <property type="term" value="F:adenylate kinase activity"/>
    <property type="evidence" value="ECO:0007669"/>
    <property type="project" value="UniProtKB-UniRule"/>
</dbReference>
<dbReference type="GO" id="GO:0005524">
    <property type="term" value="F:ATP binding"/>
    <property type="evidence" value="ECO:0007669"/>
    <property type="project" value="UniProtKB-UniRule"/>
</dbReference>
<dbReference type="GO" id="GO:0044209">
    <property type="term" value="P:AMP salvage"/>
    <property type="evidence" value="ECO:0007669"/>
    <property type="project" value="UniProtKB-UniRule"/>
</dbReference>
<dbReference type="CDD" id="cd01428">
    <property type="entry name" value="ADK"/>
    <property type="match status" value="1"/>
</dbReference>
<dbReference type="FunFam" id="3.40.50.300:FF:000106">
    <property type="entry name" value="Adenylate kinase mitochondrial"/>
    <property type="match status" value="1"/>
</dbReference>
<dbReference type="Gene3D" id="3.40.50.300">
    <property type="entry name" value="P-loop containing nucleotide triphosphate hydrolases"/>
    <property type="match status" value="1"/>
</dbReference>
<dbReference type="HAMAP" id="MF_00235">
    <property type="entry name" value="Adenylate_kinase_Adk"/>
    <property type="match status" value="1"/>
</dbReference>
<dbReference type="InterPro" id="IPR006259">
    <property type="entry name" value="Adenyl_kin_sub"/>
</dbReference>
<dbReference type="InterPro" id="IPR000850">
    <property type="entry name" value="Adenylat/UMP-CMP_kin"/>
</dbReference>
<dbReference type="InterPro" id="IPR033690">
    <property type="entry name" value="Adenylat_kinase_CS"/>
</dbReference>
<dbReference type="InterPro" id="IPR027417">
    <property type="entry name" value="P-loop_NTPase"/>
</dbReference>
<dbReference type="NCBIfam" id="TIGR01351">
    <property type="entry name" value="adk"/>
    <property type="match status" value="1"/>
</dbReference>
<dbReference type="NCBIfam" id="NF001380">
    <property type="entry name" value="PRK00279.1-2"/>
    <property type="match status" value="1"/>
</dbReference>
<dbReference type="NCBIfam" id="NF001381">
    <property type="entry name" value="PRK00279.1-3"/>
    <property type="match status" value="1"/>
</dbReference>
<dbReference type="NCBIfam" id="NF001382">
    <property type="entry name" value="PRK00279.1-4"/>
    <property type="match status" value="1"/>
</dbReference>
<dbReference type="NCBIfam" id="NF011100">
    <property type="entry name" value="PRK14527.1"/>
    <property type="match status" value="1"/>
</dbReference>
<dbReference type="PANTHER" id="PTHR23359">
    <property type="entry name" value="NUCLEOTIDE KINASE"/>
    <property type="match status" value="1"/>
</dbReference>
<dbReference type="Pfam" id="PF00406">
    <property type="entry name" value="ADK"/>
    <property type="match status" value="1"/>
</dbReference>
<dbReference type="PRINTS" id="PR00094">
    <property type="entry name" value="ADENYLTKNASE"/>
</dbReference>
<dbReference type="SUPFAM" id="SSF52540">
    <property type="entry name" value="P-loop containing nucleoside triphosphate hydrolases"/>
    <property type="match status" value="1"/>
</dbReference>
<dbReference type="PROSITE" id="PS00113">
    <property type="entry name" value="ADENYLATE_KINASE"/>
    <property type="match status" value="1"/>
</dbReference>
<sequence length="212" mass="23668">MNLLIIGLPGAGKGTQAAKIVEEFGVAHISTGDMFRAAMANQTEMGRLAKSYIDKGELVPDEVTNGIVKERLAEDDIAEKGFLLDGYPRTIEQAHALDATLEELGLRLDGVINIKVDPSCLVERLSGRIINRKTGETFHKVFNPPVDYKEEDYYQREDDKPETVKRRLDVNMAQGEPILEHYRKLGLVTDIEGNQEITDVFADVEKALLELK</sequence>
<keyword id="KW-0067">ATP-binding</keyword>
<keyword id="KW-0963">Cytoplasm</keyword>
<keyword id="KW-0418">Kinase</keyword>
<keyword id="KW-0545">Nucleotide biosynthesis</keyword>
<keyword id="KW-0547">Nucleotide-binding</keyword>
<keyword id="KW-0808">Transferase</keyword>
<evidence type="ECO:0000255" key="1">
    <source>
        <dbReference type="HAMAP-Rule" id="MF_00235"/>
    </source>
</evidence>
<comment type="function">
    <text evidence="1">Catalyzes the reversible transfer of the terminal phosphate group between ATP and AMP. Plays an important role in cellular energy homeostasis and in adenine nucleotide metabolism.</text>
</comment>
<comment type="catalytic activity">
    <reaction evidence="1">
        <text>AMP + ATP = 2 ADP</text>
        <dbReference type="Rhea" id="RHEA:12973"/>
        <dbReference type="ChEBI" id="CHEBI:30616"/>
        <dbReference type="ChEBI" id="CHEBI:456215"/>
        <dbReference type="ChEBI" id="CHEBI:456216"/>
        <dbReference type="EC" id="2.7.4.3"/>
    </reaction>
</comment>
<comment type="pathway">
    <text evidence="1">Purine metabolism; AMP biosynthesis via salvage pathway; AMP from ADP: step 1/1.</text>
</comment>
<comment type="subunit">
    <text evidence="1">Monomer.</text>
</comment>
<comment type="subcellular location">
    <subcellularLocation>
        <location evidence="1">Cytoplasm</location>
    </subcellularLocation>
</comment>
<comment type="domain">
    <text evidence="1">Consists of three domains, a large central CORE domain and two small peripheral domains, NMPbind and LID, which undergo movements during catalysis. The LID domain closes over the site of phosphoryl transfer upon ATP binding. Assembling and dissambling the active center during each catalytic cycle provides an effective means to prevent ATP hydrolysis.</text>
</comment>
<comment type="similarity">
    <text evidence="1">Belongs to the adenylate kinase family.</text>
</comment>
<name>KAD_STRPZ</name>
<feature type="chain" id="PRO_1000100616" description="Adenylate kinase">
    <location>
        <begin position="1"/>
        <end position="212"/>
    </location>
</feature>
<feature type="region of interest" description="NMP" evidence="1">
    <location>
        <begin position="30"/>
        <end position="59"/>
    </location>
</feature>
<feature type="region of interest" description="LID" evidence="1">
    <location>
        <begin position="127"/>
        <end position="159"/>
    </location>
</feature>
<feature type="binding site" evidence="1">
    <location>
        <begin position="10"/>
        <end position="15"/>
    </location>
    <ligand>
        <name>ATP</name>
        <dbReference type="ChEBI" id="CHEBI:30616"/>
    </ligand>
</feature>
<feature type="binding site" evidence="1">
    <location>
        <position position="31"/>
    </location>
    <ligand>
        <name>AMP</name>
        <dbReference type="ChEBI" id="CHEBI:456215"/>
    </ligand>
</feature>
<feature type="binding site" evidence="1">
    <location>
        <position position="36"/>
    </location>
    <ligand>
        <name>AMP</name>
        <dbReference type="ChEBI" id="CHEBI:456215"/>
    </ligand>
</feature>
<feature type="binding site" evidence="1">
    <location>
        <begin position="57"/>
        <end position="59"/>
    </location>
    <ligand>
        <name>AMP</name>
        <dbReference type="ChEBI" id="CHEBI:456215"/>
    </ligand>
</feature>
<feature type="binding site" evidence="1">
    <location>
        <begin position="86"/>
        <end position="89"/>
    </location>
    <ligand>
        <name>AMP</name>
        <dbReference type="ChEBI" id="CHEBI:456215"/>
    </ligand>
</feature>
<feature type="binding site" evidence="1">
    <location>
        <position position="93"/>
    </location>
    <ligand>
        <name>AMP</name>
        <dbReference type="ChEBI" id="CHEBI:456215"/>
    </ligand>
</feature>
<feature type="binding site" evidence="1">
    <location>
        <position position="128"/>
    </location>
    <ligand>
        <name>ATP</name>
        <dbReference type="ChEBI" id="CHEBI:30616"/>
    </ligand>
</feature>
<feature type="binding site" evidence="1">
    <location>
        <begin position="137"/>
        <end position="138"/>
    </location>
    <ligand>
        <name>ATP</name>
        <dbReference type="ChEBI" id="CHEBI:30616"/>
    </ligand>
</feature>
<feature type="binding site" evidence="1">
    <location>
        <position position="156"/>
    </location>
    <ligand>
        <name>AMP</name>
        <dbReference type="ChEBI" id="CHEBI:456215"/>
    </ligand>
</feature>
<feature type="binding site" evidence="1">
    <location>
        <position position="167"/>
    </location>
    <ligand>
        <name>AMP</name>
        <dbReference type="ChEBI" id="CHEBI:456215"/>
    </ligand>
</feature>
<feature type="binding site" evidence="1">
    <location>
        <position position="195"/>
    </location>
    <ligand>
        <name>ATP</name>
        <dbReference type="ChEBI" id="CHEBI:30616"/>
    </ligand>
</feature>
<proteinExistence type="inferred from homology"/>
<reference key="1">
    <citation type="journal article" date="2008" name="J. Bacteriol.">
        <title>Genome sequence of a nephritogenic and highly transformable M49 strain of Streptococcus pyogenes.</title>
        <authorList>
            <person name="McShan W.M."/>
            <person name="Ferretti J.J."/>
            <person name="Karasawa T."/>
            <person name="Suvorov A.N."/>
            <person name="Lin S."/>
            <person name="Qin B."/>
            <person name="Jia H."/>
            <person name="Kenton S."/>
            <person name="Najar F."/>
            <person name="Wu H."/>
            <person name="Scott J."/>
            <person name="Roe B.A."/>
            <person name="Savic D.J."/>
        </authorList>
    </citation>
    <scope>NUCLEOTIDE SEQUENCE [LARGE SCALE GENOMIC DNA]</scope>
    <source>
        <strain>NZ131</strain>
    </source>
</reference>
<gene>
    <name evidence="1" type="primary">adk</name>
    <name type="ordered locus">Spy49_0069</name>
</gene>